<dbReference type="EMBL" id="FM177140">
    <property type="protein sequence ID" value="CAQ66468.1"/>
    <property type="molecule type" value="Genomic_DNA"/>
</dbReference>
<dbReference type="SMR" id="B3WDL7"/>
<dbReference type="KEGG" id="lcb:LCABL_13870"/>
<dbReference type="HOGENOM" id="CLU_050669_0_1_9"/>
<dbReference type="GO" id="GO:0005886">
    <property type="term" value="C:plasma membrane"/>
    <property type="evidence" value="ECO:0007669"/>
    <property type="project" value="UniProtKB-SubCell"/>
</dbReference>
<dbReference type="GO" id="GO:0045259">
    <property type="term" value="C:proton-transporting ATP synthase complex"/>
    <property type="evidence" value="ECO:0007669"/>
    <property type="project" value="UniProtKB-KW"/>
</dbReference>
<dbReference type="GO" id="GO:0005524">
    <property type="term" value="F:ATP binding"/>
    <property type="evidence" value="ECO:0007669"/>
    <property type="project" value="UniProtKB-UniRule"/>
</dbReference>
<dbReference type="GO" id="GO:0046933">
    <property type="term" value="F:proton-transporting ATP synthase activity, rotational mechanism"/>
    <property type="evidence" value="ECO:0007669"/>
    <property type="project" value="UniProtKB-UniRule"/>
</dbReference>
<dbReference type="GO" id="GO:0042777">
    <property type="term" value="P:proton motive force-driven plasma membrane ATP synthesis"/>
    <property type="evidence" value="ECO:0007669"/>
    <property type="project" value="UniProtKB-UniRule"/>
</dbReference>
<dbReference type="CDD" id="cd12151">
    <property type="entry name" value="F1-ATPase_gamma"/>
    <property type="match status" value="1"/>
</dbReference>
<dbReference type="Gene3D" id="3.40.1380.10">
    <property type="match status" value="1"/>
</dbReference>
<dbReference type="Gene3D" id="1.10.287.80">
    <property type="entry name" value="ATP synthase, gamma subunit, helix hairpin domain"/>
    <property type="match status" value="1"/>
</dbReference>
<dbReference type="HAMAP" id="MF_00815">
    <property type="entry name" value="ATP_synth_gamma_bact"/>
    <property type="match status" value="1"/>
</dbReference>
<dbReference type="InterPro" id="IPR035968">
    <property type="entry name" value="ATP_synth_F1_ATPase_gsu"/>
</dbReference>
<dbReference type="InterPro" id="IPR000131">
    <property type="entry name" value="ATP_synth_F1_gsu"/>
</dbReference>
<dbReference type="InterPro" id="IPR023632">
    <property type="entry name" value="ATP_synth_F1_gsu_CS"/>
</dbReference>
<dbReference type="NCBIfam" id="TIGR01146">
    <property type="entry name" value="ATPsyn_F1gamma"/>
    <property type="match status" value="1"/>
</dbReference>
<dbReference type="NCBIfam" id="NF004147">
    <property type="entry name" value="PRK05621.2-1"/>
    <property type="match status" value="1"/>
</dbReference>
<dbReference type="PANTHER" id="PTHR11693">
    <property type="entry name" value="ATP SYNTHASE GAMMA CHAIN"/>
    <property type="match status" value="1"/>
</dbReference>
<dbReference type="PANTHER" id="PTHR11693:SF22">
    <property type="entry name" value="ATP SYNTHASE SUBUNIT GAMMA, MITOCHONDRIAL"/>
    <property type="match status" value="1"/>
</dbReference>
<dbReference type="Pfam" id="PF00231">
    <property type="entry name" value="ATP-synt"/>
    <property type="match status" value="1"/>
</dbReference>
<dbReference type="PRINTS" id="PR00126">
    <property type="entry name" value="ATPASEGAMMA"/>
</dbReference>
<dbReference type="SUPFAM" id="SSF52943">
    <property type="entry name" value="ATP synthase (F1-ATPase), gamma subunit"/>
    <property type="match status" value="1"/>
</dbReference>
<dbReference type="PROSITE" id="PS00153">
    <property type="entry name" value="ATPASE_GAMMA"/>
    <property type="match status" value="1"/>
</dbReference>
<evidence type="ECO:0000255" key="1">
    <source>
        <dbReference type="HAMAP-Rule" id="MF_00815"/>
    </source>
</evidence>
<keyword id="KW-0066">ATP synthesis</keyword>
<keyword id="KW-1003">Cell membrane</keyword>
<keyword id="KW-0139">CF(1)</keyword>
<keyword id="KW-0375">Hydrogen ion transport</keyword>
<keyword id="KW-0406">Ion transport</keyword>
<keyword id="KW-0472">Membrane</keyword>
<keyword id="KW-0813">Transport</keyword>
<name>ATPG_LACCB</name>
<sequence length="308" mass="33709">MAESLMDIKRKIASTKKTGQITQAMQMVSGAKLSQIEKRAKKYQIYSDKVRQIVTHLAAGQLLELANAAESDTDSGDKSQVISVASLLQKRPVKKTGYLVITSDRGLVGSYNSTVLKAMMQMIKDDHESPDDYVMMAIGGVGADFFKARGLNLAYEYRGVSDIPTFNEVREIVKTAVTMFDNGVFDELYVCYNHHVNTLTSAFRAEKMLPISDLDVSEVADTNVEYLIEPDLDSVLESVLPQYAESLIFGAIMDAKTAEHAASTTAMRSATDNANDLISHLSTQYNRARQAAITTEITEIVGGAAALE</sequence>
<comment type="function">
    <text evidence="1">Produces ATP from ADP in the presence of a proton gradient across the membrane. The gamma chain is believed to be important in regulating ATPase activity and the flow of protons through the CF(0) complex.</text>
</comment>
<comment type="subunit">
    <text evidence="1">F-type ATPases have 2 components, CF(1) - the catalytic core - and CF(0) - the membrane proton channel. CF(1) has five subunits: alpha(3), beta(3), gamma(1), delta(1), epsilon(1). CF(0) has three main subunits: a, b and c.</text>
</comment>
<comment type="subcellular location">
    <subcellularLocation>
        <location evidence="1">Cell membrane</location>
        <topology evidence="1">Peripheral membrane protein</topology>
    </subcellularLocation>
</comment>
<comment type="similarity">
    <text evidence="1">Belongs to the ATPase gamma chain family.</text>
</comment>
<gene>
    <name evidence="1" type="primary">atpG</name>
    <name type="ordered locus">LCABL_13870</name>
</gene>
<reference key="1">
    <citation type="submission" date="2008-06" db="EMBL/GenBank/DDBJ databases">
        <title>Lactobacillus casei BL23 complete genome sequence.</title>
        <authorList>
            <person name="Maze A."/>
            <person name="Boel G."/>
            <person name="Bourand A."/>
            <person name="Loux V."/>
            <person name="Gibrat J.F."/>
            <person name="Zuniga M."/>
            <person name="Hartke A."/>
            <person name="Deutscher J."/>
        </authorList>
    </citation>
    <scope>NUCLEOTIDE SEQUENCE [LARGE SCALE GENOMIC DNA]</scope>
    <source>
        <strain>BL23</strain>
    </source>
</reference>
<protein>
    <recommendedName>
        <fullName evidence="1">ATP synthase gamma chain</fullName>
    </recommendedName>
    <alternativeName>
        <fullName evidence="1">ATP synthase F1 sector gamma subunit</fullName>
    </alternativeName>
    <alternativeName>
        <fullName evidence="1">F-ATPase gamma subunit</fullName>
    </alternativeName>
</protein>
<organism>
    <name type="scientific">Lacticaseibacillus casei (strain BL23)</name>
    <name type="common">Lactobacillus casei</name>
    <dbReference type="NCBI Taxonomy" id="543734"/>
    <lineage>
        <taxon>Bacteria</taxon>
        <taxon>Bacillati</taxon>
        <taxon>Bacillota</taxon>
        <taxon>Bacilli</taxon>
        <taxon>Lactobacillales</taxon>
        <taxon>Lactobacillaceae</taxon>
        <taxon>Lacticaseibacillus</taxon>
    </lineage>
</organism>
<proteinExistence type="inferred from homology"/>
<feature type="chain" id="PRO_1000134166" description="ATP synthase gamma chain">
    <location>
        <begin position="1"/>
        <end position="308"/>
    </location>
</feature>
<accession>B3WDL7</accession>